<keyword id="KW-0449">Lipoprotein</keyword>
<keyword id="KW-0472">Membrane</keyword>
<keyword id="KW-0479">Metal-binding</keyword>
<keyword id="KW-0519">Myristate</keyword>
<keyword id="KW-1185">Reference proteome</keyword>
<keyword id="KW-0862">Zinc</keyword>
<keyword id="KW-0863">Zinc-finger</keyword>
<dbReference type="EMBL" id="DQ273566">
    <property type="protein sequence ID" value="ABB82021.1"/>
    <property type="molecule type" value="mRNA"/>
</dbReference>
<dbReference type="RefSeq" id="NP_001041484.1">
    <property type="nucleotide sequence ID" value="NM_001048019.1"/>
</dbReference>
<dbReference type="BMRB" id="Q2XNS1"/>
<dbReference type="FunCoup" id="Q2XNS1">
    <property type="interactions" value="970"/>
</dbReference>
<dbReference type="STRING" id="9615.ENSCAFP00000066798"/>
<dbReference type="PaxDb" id="9612-ENSCAFP00000035221"/>
<dbReference type="GeneID" id="476852"/>
<dbReference type="KEGG" id="cfa:476852"/>
<dbReference type="CTD" id="50862"/>
<dbReference type="eggNOG" id="KOG1039">
    <property type="taxonomic scope" value="Eukaryota"/>
</dbReference>
<dbReference type="InParanoid" id="Q2XNS1"/>
<dbReference type="OrthoDB" id="1630758at2759"/>
<dbReference type="Proteomes" id="UP000002254">
    <property type="component" value="Unplaced"/>
</dbReference>
<dbReference type="Proteomes" id="UP000694429">
    <property type="component" value="Unplaced"/>
</dbReference>
<dbReference type="Proteomes" id="UP000694542">
    <property type="component" value="Unplaced"/>
</dbReference>
<dbReference type="Proteomes" id="UP000805418">
    <property type="component" value="Unplaced"/>
</dbReference>
<dbReference type="GO" id="GO:0016020">
    <property type="term" value="C:membrane"/>
    <property type="evidence" value="ECO:0007669"/>
    <property type="project" value="UniProtKB-SubCell"/>
</dbReference>
<dbReference type="GO" id="GO:0004842">
    <property type="term" value="F:ubiquitin-protein transferase activity"/>
    <property type="evidence" value="ECO:0000318"/>
    <property type="project" value="GO_Central"/>
</dbReference>
<dbReference type="GO" id="GO:0008270">
    <property type="term" value="F:zinc ion binding"/>
    <property type="evidence" value="ECO:0007669"/>
    <property type="project" value="UniProtKB-KW"/>
</dbReference>
<dbReference type="GO" id="GO:0051865">
    <property type="term" value="P:protein autoubiquitination"/>
    <property type="evidence" value="ECO:0000318"/>
    <property type="project" value="GO_Central"/>
</dbReference>
<dbReference type="CDD" id="cd16545">
    <property type="entry name" value="RING-HC_RNF141"/>
    <property type="match status" value="1"/>
</dbReference>
<dbReference type="FunFam" id="3.30.40.10:FF:000160">
    <property type="entry name" value="Ring finger protein 141"/>
    <property type="match status" value="1"/>
</dbReference>
<dbReference type="Gene3D" id="3.30.40.10">
    <property type="entry name" value="Zinc/RING finger domain, C3HC4 (zinc finger)"/>
    <property type="match status" value="1"/>
</dbReference>
<dbReference type="InterPro" id="IPR043400">
    <property type="entry name" value="RING-HC_RNF141"/>
</dbReference>
<dbReference type="InterPro" id="IPR047126">
    <property type="entry name" value="RNF141-like"/>
</dbReference>
<dbReference type="InterPro" id="IPR001841">
    <property type="entry name" value="Znf_RING"/>
</dbReference>
<dbReference type="InterPro" id="IPR013083">
    <property type="entry name" value="Znf_RING/FYVE/PHD"/>
</dbReference>
<dbReference type="InterPro" id="IPR017907">
    <property type="entry name" value="Znf_RING_CS"/>
</dbReference>
<dbReference type="PANTHER" id="PTHR12109:SF3">
    <property type="entry name" value="RING FINGER PROTEIN 141"/>
    <property type="match status" value="1"/>
</dbReference>
<dbReference type="PANTHER" id="PTHR12109">
    <property type="entry name" value="RING FINGER PROTEIN 141-RELATED"/>
    <property type="match status" value="1"/>
</dbReference>
<dbReference type="Pfam" id="PF13639">
    <property type="entry name" value="zf-RING_2"/>
    <property type="match status" value="1"/>
</dbReference>
<dbReference type="SMART" id="SM00184">
    <property type="entry name" value="RING"/>
    <property type="match status" value="1"/>
</dbReference>
<dbReference type="SUPFAM" id="SSF57850">
    <property type="entry name" value="RING/U-box"/>
    <property type="match status" value="1"/>
</dbReference>
<dbReference type="PROSITE" id="PS00518">
    <property type="entry name" value="ZF_RING_1"/>
    <property type="match status" value="1"/>
</dbReference>
<dbReference type="PROSITE" id="PS50089">
    <property type="entry name" value="ZF_RING_2"/>
    <property type="match status" value="1"/>
</dbReference>
<gene>
    <name type="primary">RNF141</name>
</gene>
<organism>
    <name type="scientific">Canis lupus familiaris</name>
    <name type="common">Dog</name>
    <name type="synonym">Canis familiaris</name>
    <dbReference type="NCBI Taxonomy" id="9615"/>
    <lineage>
        <taxon>Eukaryota</taxon>
        <taxon>Metazoa</taxon>
        <taxon>Chordata</taxon>
        <taxon>Craniata</taxon>
        <taxon>Vertebrata</taxon>
        <taxon>Euteleostomi</taxon>
        <taxon>Mammalia</taxon>
        <taxon>Eutheria</taxon>
        <taxon>Laurasiatheria</taxon>
        <taxon>Carnivora</taxon>
        <taxon>Caniformia</taxon>
        <taxon>Canidae</taxon>
        <taxon>Canis</taxon>
    </lineage>
</organism>
<feature type="initiator methionine" description="Removed" evidence="2">
    <location>
        <position position="1"/>
    </location>
</feature>
<feature type="chain" id="PRO_0000289597" description="RING finger protein 141">
    <location>
        <begin position="2"/>
        <end position="231"/>
    </location>
</feature>
<feature type="zinc finger region" description="RING-type" evidence="3">
    <location>
        <begin position="156"/>
        <end position="193"/>
    </location>
</feature>
<feature type="lipid moiety-binding region" description="N-myristoyl glycine" evidence="2">
    <location>
        <position position="2"/>
    </location>
</feature>
<sequence>MGQQFSDQTQLVLNKLPEKVAKHVTLVRESGSLTYEEFLGRVAELNDMGTAKVASGQEKHLLFEVQPGSDSSAFWKVVVRVVCTKINKSTGIVEASRIMNLYQFIQLYKDITSQASGVLAQSSTSEDPDENSSSVTSCQASLWMGRVKQLTDEEECCICMDGRADLILPCAHSFCQKCIDKWSDRHRNCPICRLQMTGANESWVVSDAPTEDDMANYILNMADEAGQPHRP</sequence>
<proteinExistence type="evidence at transcript level"/>
<reference key="1">
    <citation type="submission" date="2005-11" db="EMBL/GenBank/DDBJ databases">
        <title>Molecular cloning of dog rnf141 gene.</title>
        <authorList>
            <person name="Dong J."/>
            <person name="Li M."/>
            <person name="Zhang Q."/>
            <person name="Li L."/>
            <person name="Zhang X."/>
            <person name="Li R."/>
        </authorList>
    </citation>
    <scope>NUCLEOTIDE SEQUENCE [MRNA]</scope>
    <source>
        <tissue>Testis</tissue>
    </source>
</reference>
<protein>
    <recommendedName>
        <fullName>RING finger protein 141</fullName>
    </recommendedName>
</protein>
<evidence type="ECO:0000250" key="1"/>
<evidence type="ECO:0000250" key="2">
    <source>
        <dbReference type="UniProtKB" id="Q8WVD5"/>
    </source>
</evidence>
<evidence type="ECO:0000255" key="3">
    <source>
        <dbReference type="PROSITE-ProRule" id="PRU00175"/>
    </source>
</evidence>
<name>RN141_CANLF</name>
<accession>Q2XNS1</accession>
<comment type="function">
    <text evidence="1">May be involved in spermatogenesis.</text>
</comment>
<comment type="subcellular location">
    <subcellularLocation>
        <location evidence="2">Membrane</location>
        <topology evidence="2">Lipid-anchor</topology>
    </subcellularLocation>
</comment>